<dbReference type="EMBL" id="AF132209">
    <property type="protein sequence ID" value="AAD24471.1"/>
    <property type="molecule type" value="mRNA"/>
</dbReference>
<dbReference type="EMBL" id="AF304354">
    <property type="protein sequence ID" value="AAG41952.1"/>
    <property type="molecule type" value="Genomic_DNA"/>
</dbReference>
<dbReference type="EMBL" id="AY358930">
    <property type="protein sequence ID" value="AAQ89289.1"/>
    <property type="molecule type" value="mRNA"/>
</dbReference>
<dbReference type="EMBL" id="AP000781">
    <property type="status" value="NOT_ANNOTATED_CDS"/>
    <property type="molecule type" value="Genomic_DNA"/>
</dbReference>
<dbReference type="EMBL" id="BC069126">
    <property type="protein sequence ID" value="AAH69126.1"/>
    <property type="molecule type" value="mRNA"/>
</dbReference>
<dbReference type="EMBL" id="BC101613">
    <property type="protein sequence ID" value="AAI01614.1"/>
    <property type="molecule type" value="mRNA"/>
</dbReference>
<dbReference type="EMBL" id="BC113411">
    <property type="protein sequence ID" value="AAI13412.1"/>
    <property type="molecule type" value="mRNA"/>
</dbReference>
<dbReference type="CCDS" id="CCDS7954.1"/>
<dbReference type="RefSeq" id="NP_006084.2">
    <property type="nucleotide sequence ID" value="NM_006093.4"/>
</dbReference>
<dbReference type="SMR" id="Q9Y2Y8"/>
<dbReference type="BioGRID" id="115666">
    <property type="interactions" value="56"/>
</dbReference>
<dbReference type="FunCoup" id="Q9Y2Y8">
    <property type="interactions" value="55"/>
</dbReference>
<dbReference type="IntAct" id="Q9Y2Y8">
    <property type="interactions" value="48"/>
</dbReference>
<dbReference type="STRING" id="9606.ENSP00000287143"/>
<dbReference type="MEROPS" id="I63.001"/>
<dbReference type="iPTMnet" id="Q9Y2Y8"/>
<dbReference type="PhosphoSitePlus" id="Q9Y2Y8"/>
<dbReference type="BioMuta" id="PRG3"/>
<dbReference type="DMDM" id="296452870"/>
<dbReference type="jPOST" id="Q9Y2Y8"/>
<dbReference type="MassIVE" id="Q9Y2Y8"/>
<dbReference type="PaxDb" id="9606-ENSP00000287143"/>
<dbReference type="PeptideAtlas" id="Q9Y2Y8"/>
<dbReference type="ProteomicsDB" id="85938"/>
<dbReference type="Antibodypedia" id="27347">
    <property type="antibodies" value="39 antibodies from 14 providers"/>
</dbReference>
<dbReference type="DNASU" id="10394"/>
<dbReference type="Ensembl" id="ENST00000287143.2">
    <property type="protein sequence ID" value="ENSP00000287143.2"/>
    <property type="gene ID" value="ENSG00000156575.2"/>
</dbReference>
<dbReference type="GeneID" id="10394"/>
<dbReference type="KEGG" id="hsa:10394"/>
<dbReference type="MANE-Select" id="ENST00000287143.2">
    <property type="protein sequence ID" value="ENSP00000287143.2"/>
    <property type="RefSeq nucleotide sequence ID" value="NM_006093.4"/>
    <property type="RefSeq protein sequence ID" value="NP_006084.2"/>
</dbReference>
<dbReference type="UCSC" id="uc001njv.2">
    <property type="organism name" value="human"/>
</dbReference>
<dbReference type="AGR" id="HGNC:9363"/>
<dbReference type="CTD" id="10394"/>
<dbReference type="DisGeNET" id="10394"/>
<dbReference type="GeneCards" id="PRG3"/>
<dbReference type="HGNC" id="HGNC:9363">
    <property type="gene designation" value="PRG3"/>
</dbReference>
<dbReference type="HPA" id="ENSG00000156575">
    <property type="expression patterns" value="Tissue enriched (bone)"/>
</dbReference>
<dbReference type="MIM" id="606814">
    <property type="type" value="gene"/>
</dbReference>
<dbReference type="neXtProt" id="NX_Q9Y2Y8"/>
<dbReference type="OpenTargets" id="ENSG00000156575"/>
<dbReference type="PharmGKB" id="PA33735"/>
<dbReference type="VEuPathDB" id="HostDB:ENSG00000156575"/>
<dbReference type="eggNOG" id="KOG4297">
    <property type="taxonomic scope" value="Eukaryota"/>
</dbReference>
<dbReference type="GeneTree" id="ENSGT00440000039859"/>
<dbReference type="HOGENOM" id="CLU_107200_1_0_1"/>
<dbReference type="InParanoid" id="Q9Y2Y8"/>
<dbReference type="OMA" id="FCWTDGS"/>
<dbReference type="OrthoDB" id="6369810at2759"/>
<dbReference type="PAN-GO" id="Q9Y2Y8">
    <property type="GO annotations" value="0 GO annotations based on evolutionary models"/>
</dbReference>
<dbReference type="PhylomeDB" id="Q9Y2Y8"/>
<dbReference type="TreeFam" id="TF336281"/>
<dbReference type="PathwayCommons" id="Q9Y2Y8"/>
<dbReference type="Reactome" id="R-HSA-6798695">
    <property type="pathway name" value="Neutrophil degranulation"/>
</dbReference>
<dbReference type="SignaLink" id="Q9Y2Y8"/>
<dbReference type="BioGRID-ORCS" id="10394">
    <property type="hits" value="11 hits in 1142 CRISPR screens"/>
</dbReference>
<dbReference type="ChiTaRS" id="PRG3">
    <property type="organism name" value="human"/>
</dbReference>
<dbReference type="GenomeRNAi" id="10394"/>
<dbReference type="Pharos" id="Q9Y2Y8">
    <property type="development level" value="Tbio"/>
</dbReference>
<dbReference type="PRO" id="PR:Q9Y2Y8"/>
<dbReference type="Proteomes" id="UP000005640">
    <property type="component" value="Chromosome 11"/>
</dbReference>
<dbReference type="RNAct" id="Q9Y2Y8">
    <property type="molecule type" value="protein"/>
</dbReference>
<dbReference type="Bgee" id="ENSG00000156575">
    <property type="expression patterns" value="Expressed in trabecular bone tissue and 40 other cell types or tissues"/>
</dbReference>
<dbReference type="GO" id="GO:0062023">
    <property type="term" value="C:collagen-containing extracellular matrix"/>
    <property type="evidence" value="ECO:0007005"/>
    <property type="project" value="BHF-UCL"/>
</dbReference>
<dbReference type="GO" id="GO:0005576">
    <property type="term" value="C:extracellular region"/>
    <property type="evidence" value="ECO:0000304"/>
    <property type="project" value="Reactome"/>
</dbReference>
<dbReference type="GO" id="GO:0035580">
    <property type="term" value="C:specific granule lumen"/>
    <property type="evidence" value="ECO:0000304"/>
    <property type="project" value="Reactome"/>
</dbReference>
<dbReference type="GO" id="GO:1904724">
    <property type="term" value="C:tertiary granule lumen"/>
    <property type="evidence" value="ECO:0000304"/>
    <property type="project" value="Reactome"/>
</dbReference>
<dbReference type="GO" id="GO:0030246">
    <property type="term" value="F:carbohydrate binding"/>
    <property type="evidence" value="ECO:0007669"/>
    <property type="project" value="UniProtKB-KW"/>
</dbReference>
<dbReference type="GO" id="GO:0030021">
    <property type="term" value="F:extracellular matrix structural constituent conferring compression resistance"/>
    <property type="evidence" value="ECO:0007005"/>
    <property type="project" value="BHF-UCL"/>
</dbReference>
<dbReference type="GO" id="GO:0045575">
    <property type="term" value="P:basophil activation"/>
    <property type="evidence" value="ECO:0000314"/>
    <property type="project" value="UniProtKB"/>
</dbReference>
<dbReference type="GO" id="GO:0001694">
    <property type="term" value="P:histamine biosynthetic process"/>
    <property type="evidence" value="ECO:0000314"/>
    <property type="project" value="UniProtKB"/>
</dbReference>
<dbReference type="GO" id="GO:0006955">
    <property type="term" value="P:immune response"/>
    <property type="evidence" value="ECO:0007669"/>
    <property type="project" value="InterPro"/>
</dbReference>
<dbReference type="GO" id="GO:0019370">
    <property type="term" value="P:leukotriene biosynthetic process"/>
    <property type="evidence" value="ECO:0000314"/>
    <property type="project" value="UniProtKB"/>
</dbReference>
<dbReference type="GO" id="GO:0017148">
    <property type="term" value="P:negative regulation of translation"/>
    <property type="evidence" value="ECO:0000314"/>
    <property type="project" value="UniProtKB"/>
</dbReference>
<dbReference type="GO" id="GO:0042119">
    <property type="term" value="P:neutrophil activation"/>
    <property type="evidence" value="ECO:0000314"/>
    <property type="project" value="UniProtKB"/>
</dbReference>
<dbReference type="GO" id="GO:0032757">
    <property type="term" value="P:positive regulation of interleukin-8 production"/>
    <property type="evidence" value="ECO:0000314"/>
    <property type="project" value="UniProtKB"/>
</dbReference>
<dbReference type="GO" id="GO:0042554">
    <property type="term" value="P:superoxide anion generation"/>
    <property type="evidence" value="ECO:0000314"/>
    <property type="project" value="UniProtKB"/>
</dbReference>
<dbReference type="CDD" id="cd03598">
    <property type="entry name" value="CLECT_EMBP_like"/>
    <property type="match status" value="1"/>
</dbReference>
<dbReference type="FunFam" id="3.10.100.10:FF:000090">
    <property type="entry name" value="Proteoglycan 2, bone marrow"/>
    <property type="match status" value="1"/>
</dbReference>
<dbReference type="Gene3D" id="3.10.100.10">
    <property type="entry name" value="Mannose-Binding Protein A, subunit A"/>
    <property type="match status" value="1"/>
</dbReference>
<dbReference type="InterPro" id="IPR001304">
    <property type="entry name" value="C-type_lectin-like"/>
</dbReference>
<dbReference type="InterPro" id="IPR016186">
    <property type="entry name" value="C-type_lectin-like/link_sf"/>
</dbReference>
<dbReference type="InterPro" id="IPR050111">
    <property type="entry name" value="C-type_lectin/snaclec_domain"/>
</dbReference>
<dbReference type="InterPro" id="IPR018378">
    <property type="entry name" value="C-type_lectin_CS"/>
</dbReference>
<dbReference type="InterPro" id="IPR016187">
    <property type="entry name" value="CTDL_fold"/>
</dbReference>
<dbReference type="InterPro" id="IPR033816">
    <property type="entry name" value="EMBP_CTLD"/>
</dbReference>
<dbReference type="InterPro" id="IPR002352">
    <property type="entry name" value="Eosinophil_major_basic"/>
</dbReference>
<dbReference type="PANTHER" id="PTHR22803">
    <property type="entry name" value="MANNOSE, PHOSPHOLIPASE, LECTIN RECEPTOR RELATED"/>
    <property type="match status" value="1"/>
</dbReference>
<dbReference type="Pfam" id="PF00059">
    <property type="entry name" value="Lectin_C"/>
    <property type="match status" value="1"/>
</dbReference>
<dbReference type="PRINTS" id="PR00770">
    <property type="entry name" value="EMAJORBASICP"/>
</dbReference>
<dbReference type="SMART" id="SM00034">
    <property type="entry name" value="CLECT"/>
    <property type="match status" value="1"/>
</dbReference>
<dbReference type="SUPFAM" id="SSF56436">
    <property type="entry name" value="C-type lectin-like"/>
    <property type="match status" value="1"/>
</dbReference>
<dbReference type="PROSITE" id="PS00615">
    <property type="entry name" value="C_TYPE_LECTIN_1"/>
    <property type="match status" value="1"/>
</dbReference>
<dbReference type="PROSITE" id="PS50041">
    <property type="entry name" value="C_TYPE_LECTIN_2"/>
    <property type="match status" value="1"/>
</dbReference>
<accession>Q9Y2Y8</accession>
<gene>
    <name evidence="15" type="primary">PRG3</name>
    <name evidence="7 8" type="synonym">MBPH</name>
    <name type="ORF">UNQ486/PRO1002</name>
</gene>
<keyword id="KW-1015">Disulfide bond</keyword>
<keyword id="KW-0430">Lectin</keyword>
<keyword id="KW-1267">Proteomics identification</keyword>
<keyword id="KW-1185">Reference proteome</keyword>
<keyword id="KW-0732">Signal</keyword>
<reference evidence="9 10" key="1">
    <citation type="journal article" date="1999" name="J. Biol. Chem.">
        <title>A novel and highly divergent homolog of human eosinophil granule major basic protein.</title>
        <authorList>
            <person name="Plager D.A."/>
            <person name="Loegering D.A."/>
            <person name="Weiler D.A."/>
            <person name="Checkel J.L."/>
            <person name="Wagner J.M."/>
            <person name="Clarke N.J."/>
            <person name="Naylor S."/>
            <person name="Page S.M."/>
            <person name="Thomas L.L."/>
            <person name="Akerblom I."/>
            <person name="Cocks B."/>
            <person name="Stuart S."/>
            <person name="Gleich G.J."/>
        </authorList>
    </citation>
    <scope>NUCLEOTIDE SEQUENCE [MRNA]</scope>
    <scope>FUNCTION</scope>
    <scope>SUBCELLULAR LOCATION</scope>
    <scope>TISSUE SPECIFICITY</scope>
    <scope>IDENTIFICATION BY MASS SPECTROMETRY</scope>
    <scope>VARIANTS ARG-3 AND THR-109</scope>
</reference>
<reference evidence="11" key="2">
    <citation type="journal article" date="2001" name="Genomics">
        <title>Comparative structure, proximal promoter elements, and chromosome location of the human eosinophil major basic protein genes.</title>
        <authorList>
            <person name="Plager D.A."/>
            <person name="Weiler D.A."/>
            <person name="Loegering D.A."/>
            <person name="Johnson W.B."/>
            <person name="Haley L."/>
            <person name="Eddy R.L."/>
            <person name="Shows T.B."/>
            <person name="Gleich G.J."/>
        </authorList>
    </citation>
    <scope>NUCLEOTIDE SEQUENCE [GENOMIC DNA]</scope>
    <scope>VARIANTS ARG-3 AND THR-109</scope>
</reference>
<reference evidence="14" key="3">
    <citation type="journal article" date="2003" name="Genome Res.">
        <title>The secreted protein discovery initiative (SPDI), a large-scale effort to identify novel human secreted and transmembrane proteins: a bioinformatics assessment.</title>
        <authorList>
            <person name="Clark H.F."/>
            <person name="Gurney A.L."/>
            <person name="Abaya E."/>
            <person name="Baker K."/>
            <person name="Baldwin D.T."/>
            <person name="Brush J."/>
            <person name="Chen J."/>
            <person name="Chow B."/>
            <person name="Chui C."/>
            <person name="Crowley C."/>
            <person name="Currell B."/>
            <person name="Deuel B."/>
            <person name="Dowd P."/>
            <person name="Eaton D."/>
            <person name="Foster J.S."/>
            <person name="Grimaldi C."/>
            <person name="Gu Q."/>
            <person name="Hass P.E."/>
            <person name="Heldens S."/>
            <person name="Huang A."/>
            <person name="Kim H.S."/>
            <person name="Klimowski L."/>
            <person name="Jin Y."/>
            <person name="Johnson S."/>
            <person name="Lee J."/>
            <person name="Lewis L."/>
            <person name="Liao D."/>
            <person name="Mark M.R."/>
            <person name="Robbie E."/>
            <person name="Sanchez C."/>
            <person name="Schoenfeld J."/>
            <person name="Seshagiri S."/>
            <person name="Simmons L."/>
            <person name="Singh J."/>
            <person name="Smith V."/>
            <person name="Stinson J."/>
            <person name="Vagts A."/>
            <person name="Vandlen R.L."/>
            <person name="Watanabe C."/>
            <person name="Wieand D."/>
            <person name="Woods K."/>
            <person name="Xie M.-H."/>
            <person name="Yansura D.G."/>
            <person name="Yi S."/>
            <person name="Yu G."/>
            <person name="Yuan J."/>
            <person name="Zhang M."/>
            <person name="Zhang Z."/>
            <person name="Goddard A.D."/>
            <person name="Wood W.I."/>
            <person name="Godowski P.J."/>
            <person name="Gray A.M."/>
        </authorList>
    </citation>
    <scope>NUCLEOTIDE SEQUENCE [LARGE SCALE MRNA]</scope>
    <scope>VARIANTS ARG-3 AND THR-109</scope>
</reference>
<reference key="4">
    <citation type="journal article" date="2006" name="Nature">
        <title>Human chromosome 11 DNA sequence and analysis including novel gene identification.</title>
        <authorList>
            <person name="Taylor T.D."/>
            <person name="Noguchi H."/>
            <person name="Totoki Y."/>
            <person name="Toyoda A."/>
            <person name="Kuroki Y."/>
            <person name="Dewar K."/>
            <person name="Lloyd C."/>
            <person name="Itoh T."/>
            <person name="Takeda T."/>
            <person name="Kim D.-W."/>
            <person name="She X."/>
            <person name="Barlow K.F."/>
            <person name="Bloom T."/>
            <person name="Bruford E."/>
            <person name="Chang J.L."/>
            <person name="Cuomo C.A."/>
            <person name="Eichler E."/>
            <person name="FitzGerald M.G."/>
            <person name="Jaffe D.B."/>
            <person name="LaButti K."/>
            <person name="Nicol R."/>
            <person name="Park H.-S."/>
            <person name="Seaman C."/>
            <person name="Sougnez C."/>
            <person name="Yang X."/>
            <person name="Zimmer A.R."/>
            <person name="Zody M.C."/>
            <person name="Birren B.W."/>
            <person name="Nusbaum C."/>
            <person name="Fujiyama A."/>
            <person name="Hattori M."/>
            <person name="Rogers J."/>
            <person name="Lander E.S."/>
            <person name="Sakaki Y."/>
        </authorList>
    </citation>
    <scope>NUCLEOTIDE SEQUENCE [LARGE SCALE GENOMIC DNA]</scope>
</reference>
<reference evidence="12" key="5">
    <citation type="journal article" date="2004" name="Genome Res.">
        <title>The status, quality, and expansion of the NIH full-length cDNA project: the Mammalian Gene Collection (MGC).</title>
        <authorList>
            <consortium name="The MGC Project Team"/>
        </authorList>
    </citation>
    <scope>NUCLEOTIDE SEQUENCE [LARGE SCALE MRNA]</scope>
    <scope>VARIANTS ARG-3 AND THR-109</scope>
    <source>
        <tissue evidence="13">Liver</tissue>
    </source>
</reference>
<protein>
    <recommendedName>
        <fullName>Proteoglycan 3</fullName>
    </recommendedName>
    <alternativeName>
        <fullName>Eosinophil major basic protein homolog</fullName>
    </alternativeName>
    <alternativeName>
        <fullName>Prepro-major basic protein homolog</fullName>
        <shortName>Prepro-MBPH</shortName>
    </alternativeName>
</protein>
<evidence type="ECO:0000255" key="1"/>
<evidence type="ECO:0000255" key="2">
    <source>
        <dbReference type="PROSITE-ProRule" id="PRU00040"/>
    </source>
</evidence>
<evidence type="ECO:0000269" key="3">
    <source>
    </source>
</evidence>
<evidence type="ECO:0000269" key="4">
    <source>
    </source>
</evidence>
<evidence type="ECO:0000269" key="5">
    <source>
    </source>
</evidence>
<evidence type="ECO:0000269" key="6">
    <source>
    </source>
</evidence>
<evidence type="ECO:0000303" key="7">
    <source>
    </source>
</evidence>
<evidence type="ECO:0000303" key="8">
    <source>
    </source>
</evidence>
<evidence type="ECO:0000305" key="9"/>
<evidence type="ECO:0000312" key="10">
    <source>
        <dbReference type="EMBL" id="AAD24471.1"/>
    </source>
</evidence>
<evidence type="ECO:0000312" key="11">
    <source>
        <dbReference type="EMBL" id="AAG41952.1"/>
    </source>
</evidence>
<evidence type="ECO:0000312" key="12">
    <source>
        <dbReference type="EMBL" id="AAH69126.1"/>
    </source>
</evidence>
<evidence type="ECO:0000312" key="13">
    <source>
        <dbReference type="EMBL" id="AAI01614.1"/>
    </source>
</evidence>
<evidence type="ECO:0000312" key="14">
    <source>
        <dbReference type="EMBL" id="AAQ89289.1"/>
    </source>
</evidence>
<evidence type="ECO:0000312" key="15">
    <source>
        <dbReference type="HGNC" id="HGNC:9363"/>
    </source>
</evidence>
<name>PRG3_HUMAN</name>
<proteinExistence type="evidence at protein level"/>
<sequence>MQCLLLLPFLLLGTVSALHLENDAPHLESLETQADLGQDLDSSKEQERDLALTEEVIQAEGEEVKASACQDNFEDEEAMESDPAALDKDFQCPREEDIVEVQGSPRCKICRYLLVRTPKTFAEAQNVCSRCYGGNLVSIHDFNFNYRIQCCTSTVNQAQVWIGGNLRGWFLWKRFCWTDGSHWNFAYWSPGQPGNGQGSCVALCTKGGYWRRAQCDKQLPFVCSF</sequence>
<organism>
    <name type="scientific">Homo sapiens</name>
    <name type="common">Human</name>
    <dbReference type="NCBI Taxonomy" id="9606"/>
    <lineage>
        <taxon>Eukaryota</taxon>
        <taxon>Metazoa</taxon>
        <taxon>Chordata</taxon>
        <taxon>Craniata</taxon>
        <taxon>Vertebrata</taxon>
        <taxon>Euteleostomi</taxon>
        <taxon>Mammalia</taxon>
        <taxon>Eutheria</taxon>
        <taxon>Euarchontoglires</taxon>
        <taxon>Primates</taxon>
        <taxon>Haplorrhini</taxon>
        <taxon>Catarrhini</taxon>
        <taxon>Hominidae</taxon>
        <taxon>Homo</taxon>
    </lineage>
</organism>
<feature type="signal peptide" evidence="1">
    <location>
        <begin position="1"/>
        <end position="17"/>
    </location>
</feature>
<feature type="chain" id="PRO_0000250421" description="Proteoglycan 3" evidence="1">
    <location>
        <begin position="18"/>
        <end position="225"/>
    </location>
</feature>
<feature type="domain" description="C-type lectin" evidence="2">
    <location>
        <begin position="107"/>
        <end position="224"/>
    </location>
</feature>
<feature type="disulfide bond" evidence="2">
    <location>
        <begin position="128"/>
        <end position="223"/>
    </location>
</feature>
<feature type="disulfide bond" evidence="2">
    <location>
        <begin position="200"/>
        <end position="215"/>
    </location>
</feature>
<feature type="sequence variant" id="VAR_050117" description="In dbSNP:rs669661." evidence="3 4 5 6">
    <original>C</original>
    <variation>R</variation>
    <location>
        <position position="3"/>
    </location>
</feature>
<feature type="sequence variant" id="VAR_050118" description="In dbSNP:rs540687." evidence="3 4 5 6">
    <original>I</original>
    <variation>T</variation>
    <location>
        <position position="109"/>
    </location>
</feature>
<comment type="function">
    <text evidence="3">Possesses similar cytotoxic and cytostimulatory activities to PRG2/MBP. In vitro, stimulates neutrophil superoxide production and IL8 release, and histamine and leukotriene C4 release from basophils.</text>
</comment>
<comment type="subcellular location">
    <subcellularLocation>
        <location evidence="3">Cytoplasmic granule</location>
    </subcellularLocation>
    <text>Localized to the eosinophil secondary granule.</text>
</comment>
<comment type="tissue specificity">
    <text evidence="3">Expressed in bone marrow. Not detected in placenta.</text>
</comment>
<comment type="online information" name="Functional Glycomics Gateway - Glycan Binding">
    <link uri="http://www.functionalglycomics.org/glycomics/GBPServlet?&amp;operationType=view&amp;cbpId=cbp_hum_Ctlect_208"/>
    <text>Eosinophil major basic protein homolog</text>
</comment>